<evidence type="ECO:0000255" key="1">
    <source>
        <dbReference type="HAMAP-Rule" id="MF_00076"/>
    </source>
</evidence>
<keyword id="KW-0028">Amino-acid biosynthesis</keyword>
<keyword id="KW-0963">Cytoplasm</keyword>
<keyword id="KW-0368">Histidine biosynthesis</keyword>
<keyword id="KW-0456">Lyase</keyword>
<keyword id="KW-1185">Reference proteome</keyword>
<comment type="catalytic activity">
    <reaction evidence="1">
        <text>D-erythro-1-(imidazol-4-yl)glycerol 3-phosphate = 3-(imidazol-4-yl)-2-oxopropyl phosphate + H2O</text>
        <dbReference type="Rhea" id="RHEA:11040"/>
        <dbReference type="ChEBI" id="CHEBI:15377"/>
        <dbReference type="ChEBI" id="CHEBI:57766"/>
        <dbReference type="ChEBI" id="CHEBI:58278"/>
        <dbReference type="EC" id="4.2.1.19"/>
    </reaction>
</comment>
<comment type="pathway">
    <text evidence="1">Amino-acid biosynthesis; L-histidine biosynthesis; L-histidine from 5-phospho-alpha-D-ribose 1-diphosphate: step 6/9.</text>
</comment>
<comment type="subcellular location">
    <subcellularLocation>
        <location evidence="1">Cytoplasm</location>
    </subcellularLocation>
</comment>
<comment type="similarity">
    <text evidence="1">Belongs to the imidazoleglycerol-phosphate dehydratase family.</text>
</comment>
<gene>
    <name evidence="1" type="primary">hisB</name>
    <name type="ordered locus">BQ2027_MB1627</name>
</gene>
<organism>
    <name type="scientific">Mycobacterium bovis (strain ATCC BAA-935 / AF2122/97)</name>
    <dbReference type="NCBI Taxonomy" id="233413"/>
    <lineage>
        <taxon>Bacteria</taxon>
        <taxon>Bacillati</taxon>
        <taxon>Actinomycetota</taxon>
        <taxon>Actinomycetes</taxon>
        <taxon>Mycobacteriales</taxon>
        <taxon>Mycobacteriaceae</taxon>
        <taxon>Mycobacterium</taxon>
        <taxon>Mycobacterium tuberculosis complex</taxon>
    </lineage>
</organism>
<sequence>MTTTQTAKASRRARIERRTRESDIVIELDLDGTGQVAVDTGVPFYDHMLTALGSHASFDLTVRATGDVEIEAHHTIEDTAIALGTALGQALGDKRGIRRFGDAFIPMDETLAHAAVDLSGRPYCVHTGEPDHLQHTTIAGSSVPYHTVINRHVFESLAANARIALHVRVLYGRDPHHITEAQYKAVARALRQAVEPDPRVSGVPSTKGAL</sequence>
<reference key="1">
    <citation type="journal article" date="2003" name="Proc. Natl. Acad. Sci. U.S.A.">
        <title>The complete genome sequence of Mycobacterium bovis.</title>
        <authorList>
            <person name="Garnier T."/>
            <person name="Eiglmeier K."/>
            <person name="Camus J.-C."/>
            <person name="Medina N."/>
            <person name="Mansoor H."/>
            <person name="Pryor M."/>
            <person name="Duthoy S."/>
            <person name="Grondin S."/>
            <person name="Lacroix C."/>
            <person name="Monsempe C."/>
            <person name="Simon S."/>
            <person name="Harris B."/>
            <person name="Atkin R."/>
            <person name="Doggett J."/>
            <person name="Mayes R."/>
            <person name="Keating L."/>
            <person name="Wheeler P.R."/>
            <person name="Parkhill J."/>
            <person name="Barrell B.G."/>
            <person name="Cole S.T."/>
            <person name="Gordon S.V."/>
            <person name="Hewinson R.G."/>
        </authorList>
    </citation>
    <scope>NUCLEOTIDE SEQUENCE [LARGE SCALE GENOMIC DNA]</scope>
    <source>
        <strain>ATCC BAA-935 / AF2122/97</strain>
    </source>
</reference>
<reference key="2">
    <citation type="journal article" date="2017" name="Genome Announc.">
        <title>Updated reference genome sequence and annotation of Mycobacterium bovis AF2122/97.</title>
        <authorList>
            <person name="Malone K.M."/>
            <person name="Farrell D."/>
            <person name="Stuber T.P."/>
            <person name="Schubert O.T."/>
            <person name="Aebersold R."/>
            <person name="Robbe-Austerman S."/>
            <person name="Gordon S.V."/>
        </authorList>
    </citation>
    <scope>NUCLEOTIDE SEQUENCE [LARGE SCALE GENOMIC DNA]</scope>
    <scope>GENOME REANNOTATION</scope>
    <source>
        <strain>ATCC BAA-935 / AF2122/97</strain>
    </source>
</reference>
<feature type="chain" id="PRO_0000158143" description="Imidazoleglycerol-phosphate dehydratase">
    <location>
        <begin position="1"/>
        <end position="210"/>
    </location>
</feature>
<name>HIS7_MYCBO</name>
<dbReference type="EC" id="4.2.1.19" evidence="1"/>
<dbReference type="EMBL" id="LT708304">
    <property type="protein sequence ID" value="SIU00231.1"/>
    <property type="molecule type" value="Genomic_DNA"/>
</dbReference>
<dbReference type="RefSeq" id="NP_855280.1">
    <property type="nucleotide sequence ID" value="NC_002945.3"/>
</dbReference>
<dbReference type="RefSeq" id="WP_003407950.1">
    <property type="nucleotide sequence ID" value="NC_002945.4"/>
</dbReference>
<dbReference type="SMR" id="P64369"/>
<dbReference type="KEGG" id="mbo:BQ2027_MB1627"/>
<dbReference type="PATRIC" id="fig|233413.5.peg.1776"/>
<dbReference type="UniPathway" id="UPA00031">
    <property type="reaction ID" value="UER00011"/>
</dbReference>
<dbReference type="Proteomes" id="UP000001419">
    <property type="component" value="Chromosome"/>
</dbReference>
<dbReference type="GO" id="GO:0005737">
    <property type="term" value="C:cytoplasm"/>
    <property type="evidence" value="ECO:0007669"/>
    <property type="project" value="UniProtKB-SubCell"/>
</dbReference>
<dbReference type="GO" id="GO:0004424">
    <property type="term" value="F:imidazoleglycerol-phosphate dehydratase activity"/>
    <property type="evidence" value="ECO:0007669"/>
    <property type="project" value="UniProtKB-UniRule"/>
</dbReference>
<dbReference type="GO" id="GO:0000105">
    <property type="term" value="P:L-histidine biosynthetic process"/>
    <property type="evidence" value="ECO:0007669"/>
    <property type="project" value="UniProtKB-UniRule"/>
</dbReference>
<dbReference type="CDD" id="cd07914">
    <property type="entry name" value="IGPD"/>
    <property type="match status" value="1"/>
</dbReference>
<dbReference type="FunFam" id="3.30.230.40:FF:000001">
    <property type="entry name" value="Imidazoleglycerol-phosphate dehydratase HisB"/>
    <property type="match status" value="1"/>
</dbReference>
<dbReference type="FunFam" id="3.30.230.40:FF:000003">
    <property type="entry name" value="Imidazoleglycerol-phosphate dehydratase HisB"/>
    <property type="match status" value="1"/>
</dbReference>
<dbReference type="Gene3D" id="3.30.230.40">
    <property type="entry name" value="Imidazole glycerol phosphate dehydratase, domain 1"/>
    <property type="match status" value="2"/>
</dbReference>
<dbReference type="HAMAP" id="MF_00076">
    <property type="entry name" value="HisB"/>
    <property type="match status" value="1"/>
</dbReference>
<dbReference type="InterPro" id="IPR038494">
    <property type="entry name" value="IGPD_sf"/>
</dbReference>
<dbReference type="InterPro" id="IPR000807">
    <property type="entry name" value="ImidazoleglycerolP_deHydtase"/>
</dbReference>
<dbReference type="InterPro" id="IPR020565">
    <property type="entry name" value="ImidazoleglycerP_deHydtase_CS"/>
</dbReference>
<dbReference type="InterPro" id="IPR020568">
    <property type="entry name" value="Ribosomal_Su5_D2-typ_SF"/>
</dbReference>
<dbReference type="NCBIfam" id="NF002110">
    <property type="entry name" value="PRK00951.1-6"/>
    <property type="match status" value="1"/>
</dbReference>
<dbReference type="NCBIfam" id="NF002111">
    <property type="entry name" value="PRK00951.2-1"/>
    <property type="match status" value="1"/>
</dbReference>
<dbReference type="NCBIfam" id="NF002114">
    <property type="entry name" value="PRK00951.2-4"/>
    <property type="match status" value="1"/>
</dbReference>
<dbReference type="PANTHER" id="PTHR23133:SF2">
    <property type="entry name" value="IMIDAZOLEGLYCEROL-PHOSPHATE DEHYDRATASE"/>
    <property type="match status" value="1"/>
</dbReference>
<dbReference type="PANTHER" id="PTHR23133">
    <property type="entry name" value="IMIDAZOLEGLYCEROL-PHOSPHATE DEHYDRATASE HIS7"/>
    <property type="match status" value="1"/>
</dbReference>
<dbReference type="Pfam" id="PF00475">
    <property type="entry name" value="IGPD"/>
    <property type="match status" value="1"/>
</dbReference>
<dbReference type="SUPFAM" id="SSF54211">
    <property type="entry name" value="Ribosomal protein S5 domain 2-like"/>
    <property type="match status" value="2"/>
</dbReference>
<dbReference type="PROSITE" id="PS00954">
    <property type="entry name" value="IGP_DEHYDRATASE_1"/>
    <property type="match status" value="1"/>
</dbReference>
<dbReference type="PROSITE" id="PS00955">
    <property type="entry name" value="IGP_DEHYDRATASE_2"/>
    <property type="match status" value="1"/>
</dbReference>
<protein>
    <recommendedName>
        <fullName evidence="1">Imidazoleglycerol-phosphate dehydratase</fullName>
        <shortName evidence="1">IGPD</shortName>
        <ecNumber evidence="1">4.2.1.19</ecNumber>
    </recommendedName>
</protein>
<accession>P64369</accession>
<accession>A0A1R3XYR6</accession>
<accession>O06590</accession>
<accession>X2BIE6</accession>
<proteinExistence type="inferred from homology"/>